<reference key="1">
    <citation type="journal article" date="2009" name="Infect. Immun.">
        <title>Comparative genomics reveal extensive transposon-mediated genomic plasticity and diversity among potential effector proteins within the genus Coxiella.</title>
        <authorList>
            <person name="Beare P.A."/>
            <person name="Unsworth N."/>
            <person name="Andoh M."/>
            <person name="Voth D.E."/>
            <person name="Omsland A."/>
            <person name="Gilk S.D."/>
            <person name="Williams K.P."/>
            <person name="Sobral B.W."/>
            <person name="Kupko J.J. III"/>
            <person name="Porcella S.F."/>
            <person name="Samuel J.E."/>
            <person name="Heinzen R.A."/>
        </authorList>
    </citation>
    <scope>NUCLEOTIDE SEQUENCE [LARGE SCALE GENOMIC DNA]</scope>
    <source>
        <strain>CbuG_Q212</strain>
    </source>
</reference>
<organism>
    <name type="scientific">Coxiella burnetii (strain CbuG_Q212)</name>
    <name type="common">Coxiella burnetii (strain Q212)</name>
    <dbReference type="NCBI Taxonomy" id="434923"/>
    <lineage>
        <taxon>Bacteria</taxon>
        <taxon>Pseudomonadati</taxon>
        <taxon>Pseudomonadota</taxon>
        <taxon>Gammaproteobacteria</taxon>
        <taxon>Legionellales</taxon>
        <taxon>Coxiellaceae</taxon>
        <taxon>Coxiella</taxon>
    </lineage>
</organism>
<gene>
    <name evidence="1" type="primary">tsf</name>
    <name type="ordered locus">CbuG_0626</name>
</gene>
<feature type="chain" id="PRO_1000116720" description="Elongation factor Ts">
    <location>
        <begin position="1"/>
        <end position="296"/>
    </location>
</feature>
<feature type="region of interest" description="Involved in Mg(2+) ion dislocation from EF-Tu" evidence="1">
    <location>
        <begin position="82"/>
        <end position="85"/>
    </location>
</feature>
<name>EFTS_COXB2</name>
<keyword id="KW-0963">Cytoplasm</keyword>
<keyword id="KW-0251">Elongation factor</keyword>
<keyword id="KW-0648">Protein biosynthesis</keyword>
<evidence type="ECO:0000255" key="1">
    <source>
        <dbReference type="HAMAP-Rule" id="MF_00050"/>
    </source>
</evidence>
<proteinExistence type="inferred from homology"/>
<dbReference type="EMBL" id="CP001019">
    <property type="protein sequence ID" value="ACJ18035.1"/>
    <property type="molecule type" value="Genomic_DNA"/>
</dbReference>
<dbReference type="RefSeq" id="WP_005772548.1">
    <property type="nucleotide sequence ID" value="NC_011527.1"/>
</dbReference>
<dbReference type="SMR" id="B6IZA7"/>
<dbReference type="KEGG" id="cbg:CbuG_0626"/>
<dbReference type="HOGENOM" id="CLU_047155_0_2_6"/>
<dbReference type="GO" id="GO:0005737">
    <property type="term" value="C:cytoplasm"/>
    <property type="evidence" value="ECO:0007669"/>
    <property type="project" value="UniProtKB-SubCell"/>
</dbReference>
<dbReference type="GO" id="GO:0003746">
    <property type="term" value="F:translation elongation factor activity"/>
    <property type="evidence" value="ECO:0007669"/>
    <property type="project" value="UniProtKB-UniRule"/>
</dbReference>
<dbReference type="CDD" id="cd14275">
    <property type="entry name" value="UBA_EF-Ts"/>
    <property type="match status" value="1"/>
</dbReference>
<dbReference type="FunFam" id="1.10.286.20:FF:000001">
    <property type="entry name" value="Elongation factor Ts"/>
    <property type="match status" value="1"/>
</dbReference>
<dbReference type="FunFam" id="1.10.8.10:FF:000001">
    <property type="entry name" value="Elongation factor Ts"/>
    <property type="match status" value="1"/>
</dbReference>
<dbReference type="FunFam" id="3.30.479.20:FF:000001">
    <property type="entry name" value="Elongation factor Ts"/>
    <property type="match status" value="1"/>
</dbReference>
<dbReference type="Gene3D" id="1.10.286.20">
    <property type="match status" value="1"/>
</dbReference>
<dbReference type="Gene3D" id="1.10.8.10">
    <property type="entry name" value="DNA helicase RuvA subunit, C-terminal domain"/>
    <property type="match status" value="1"/>
</dbReference>
<dbReference type="Gene3D" id="3.30.479.20">
    <property type="entry name" value="Elongation factor Ts, dimerisation domain"/>
    <property type="match status" value="2"/>
</dbReference>
<dbReference type="HAMAP" id="MF_00050">
    <property type="entry name" value="EF_Ts"/>
    <property type="match status" value="1"/>
</dbReference>
<dbReference type="InterPro" id="IPR036402">
    <property type="entry name" value="EF-Ts_dimer_sf"/>
</dbReference>
<dbReference type="InterPro" id="IPR001816">
    <property type="entry name" value="Transl_elong_EFTs/EF1B"/>
</dbReference>
<dbReference type="InterPro" id="IPR014039">
    <property type="entry name" value="Transl_elong_EFTs/EF1B_dimer"/>
</dbReference>
<dbReference type="InterPro" id="IPR018101">
    <property type="entry name" value="Transl_elong_Ts_CS"/>
</dbReference>
<dbReference type="InterPro" id="IPR009060">
    <property type="entry name" value="UBA-like_sf"/>
</dbReference>
<dbReference type="NCBIfam" id="TIGR00116">
    <property type="entry name" value="tsf"/>
    <property type="match status" value="1"/>
</dbReference>
<dbReference type="PANTHER" id="PTHR11741">
    <property type="entry name" value="ELONGATION FACTOR TS"/>
    <property type="match status" value="1"/>
</dbReference>
<dbReference type="PANTHER" id="PTHR11741:SF0">
    <property type="entry name" value="ELONGATION FACTOR TS, MITOCHONDRIAL"/>
    <property type="match status" value="1"/>
</dbReference>
<dbReference type="Pfam" id="PF00889">
    <property type="entry name" value="EF_TS"/>
    <property type="match status" value="1"/>
</dbReference>
<dbReference type="SUPFAM" id="SSF54713">
    <property type="entry name" value="Elongation factor Ts (EF-Ts), dimerisation domain"/>
    <property type="match status" value="2"/>
</dbReference>
<dbReference type="SUPFAM" id="SSF46934">
    <property type="entry name" value="UBA-like"/>
    <property type="match status" value="1"/>
</dbReference>
<dbReference type="PROSITE" id="PS01126">
    <property type="entry name" value="EF_TS_1"/>
    <property type="match status" value="1"/>
</dbReference>
<dbReference type="PROSITE" id="PS01127">
    <property type="entry name" value="EF_TS_2"/>
    <property type="match status" value="1"/>
</dbReference>
<accession>B6IZA7</accession>
<comment type="function">
    <text evidence="1">Associates with the EF-Tu.GDP complex and induces the exchange of GDP to GTP. It remains bound to the aminoacyl-tRNA.EF-Tu.GTP complex up to the GTP hydrolysis stage on the ribosome.</text>
</comment>
<comment type="subcellular location">
    <subcellularLocation>
        <location evidence="1">Cytoplasm</location>
    </subcellularLocation>
</comment>
<comment type="similarity">
    <text evidence="1">Belongs to the EF-Ts family.</text>
</comment>
<sequence length="296" mass="31820">MTTITPIMVKELRERTGAAVMACKKALQETNGDMEAAIDLLRKAGDAKAAKRAGKTAAEGVIVIAISKDQKKGFMAEVNSETDFVARDTNFMAFASKVAERGLAEGVSDVAATLALPIEPNSSSTIEDERKALVNRIGENIQIRRVASLSSDGVVGHYSHGGRIGVLLALDVPNPELAKGLAMHVAAFNPQAVSANQVSTEFVEKEKEIFLARAQETGKPANIIEKMVKGQVEKLLKEVSLEGQSFVKDPEKLVGDLLKAEKAKVLAFLRFEVGEGVEKESQNFADEVMAQVQGNR</sequence>
<protein>
    <recommendedName>
        <fullName evidence="1">Elongation factor Ts</fullName>
        <shortName evidence="1">EF-Ts</shortName>
    </recommendedName>
</protein>